<dbReference type="EC" id="3.4.24.-"/>
<dbReference type="EMBL" id="Y08616">
    <property type="protein sequence ID" value="CAA69908.1"/>
    <property type="molecule type" value="mRNA"/>
</dbReference>
<dbReference type="RefSeq" id="NP_064463.1">
    <property type="nucleotide sequence ID" value="NM_020078.1"/>
</dbReference>
<dbReference type="SMR" id="P70505"/>
<dbReference type="FunCoup" id="P70505">
    <property type="interactions" value="1"/>
</dbReference>
<dbReference type="STRING" id="10116.ENSRNOP00000060323"/>
<dbReference type="MEROPS" id="M12.203"/>
<dbReference type="GlyCosmos" id="P70505">
    <property type="glycosylation" value="4 sites, No reported glycans"/>
</dbReference>
<dbReference type="GlyGen" id="P70505">
    <property type="glycosylation" value="5 sites"/>
</dbReference>
<dbReference type="PhosphoSitePlus" id="P70505"/>
<dbReference type="GeneID" id="56777"/>
<dbReference type="KEGG" id="rno:56777"/>
<dbReference type="UCSC" id="RGD:621467">
    <property type="organism name" value="rat"/>
</dbReference>
<dbReference type="AGR" id="RGD:621467"/>
<dbReference type="CTD" id="8759"/>
<dbReference type="RGD" id="621467">
    <property type="gene designation" value="Adam1a"/>
</dbReference>
<dbReference type="InParanoid" id="P70505"/>
<dbReference type="OrthoDB" id="5951731at2759"/>
<dbReference type="PhylomeDB" id="P70505"/>
<dbReference type="BRENDA" id="3.4.24.B8">
    <property type="organism ID" value="5301"/>
</dbReference>
<dbReference type="PRO" id="PR:P70505"/>
<dbReference type="Proteomes" id="UP000002494">
    <property type="component" value="Unplaced"/>
</dbReference>
<dbReference type="GO" id="GO:0009897">
    <property type="term" value="C:external side of plasma membrane"/>
    <property type="evidence" value="ECO:0000318"/>
    <property type="project" value="GO_Central"/>
</dbReference>
<dbReference type="GO" id="GO:0016020">
    <property type="term" value="C:membrane"/>
    <property type="evidence" value="ECO:0000303"/>
    <property type="project" value="UniProtKB"/>
</dbReference>
<dbReference type="GO" id="GO:0045121">
    <property type="term" value="C:membrane raft"/>
    <property type="evidence" value="ECO:0000266"/>
    <property type="project" value="RGD"/>
</dbReference>
<dbReference type="GO" id="GO:0005886">
    <property type="term" value="C:plasma membrane"/>
    <property type="evidence" value="ECO:0000318"/>
    <property type="project" value="GO_Central"/>
</dbReference>
<dbReference type="GO" id="GO:1990913">
    <property type="term" value="C:sperm head plasma membrane"/>
    <property type="evidence" value="ECO:0000318"/>
    <property type="project" value="GO_Central"/>
</dbReference>
<dbReference type="GO" id="GO:0046872">
    <property type="term" value="F:metal ion binding"/>
    <property type="evidence" value="ECO:0007669"/>
    <property type="project" value="UniProtKB-KW"/>
</dbReference>
<dbReference type="GO" id="GO:0004222">
    <property type="term" value="F:metalloendopeptidase activity"/>
    <property type="evidence" value="ECO:0000318"/>
    <property type="project" value="GO_Central"/>
</dbReference>
<dbReference type="GO" id="GO:0008237">
    <property type="term" value="F:metallopeptidase activity"/>
    <property type="evidence" value="ECO:0000303"/>
    <property type="project" value="UniProtKB"/>
</dbReference>
<dbReference type="GO" id="GO:0007339">
    <property type="term" value="P:binding of sperm to zona pellucida"/>
    <property type="evidence" value="ECO:0000266"/>
    <property type="project" value="RGD"/>
</dbReference>
<dbReference type="GO" id="GO:0008584">
    <property type="term" value="P:male gonad development"/>
    <property type="evidence" value="ECO:0000270"/>
    <property type="project" value="RGD"/>
</dbReference>
<dbReference type="GO" id="GO:0006508">
    <property type="term" value="P:proteolysis"/>
    <property type="evidence" value="ECO:0000318"/>
    <property type="project" value="GO_Central"/>
</dbReference>
<dbReference type="CDD" id="cd04269">
    <property type="entry name" value="ZnMc_adamalysin_II_like"/>
    <property type="match status" value="1"/>
</dbReference>
<dbReference type="FunFam" id="3.40.390.10:FF:000002">
    <property type="entry name" value="Disintegrin and metalloproteinase domain-containing protein 22"/>
    <property type="match status" value="1"/>
</dbReference>
<dbReference type="FunFam" id="4.10.70.10:FF:000001">
    <property type="entry name" value="Disintegrin and metalloproteinase domain-containing protein 22"/>
    <property type="match status" value="1"/>
</dbReference>
<dbReference type="Gene3D" id="3.40.390.10">
    <property type="entry name" value="Collagenase (Catalytic Domain)"/>
    <property type="match status" value="1"/>
</dbReference>
<dbReference type="Gene3D" id="4.10.70.10">
    <property type="entry name" value="Disintegrin domain"/>
    <property type="match status" value="1"/>
</dbReference>
<dbReference type="InterPro" id="IPR006586">
    <property type="entry name" value="ADAM_Cys-rich"/>
</dbReference>
<dbReference type="InterPro" id="IPR018358">
    <property type="entry name" value="Disintegrin_CS"/>
</dbReference>
<dbReference type="InterPro" id="IPR001762">
    <property type="entry name" value="Disintegrin_dom"/>
</dbReference>
<dbReference type="InterPro" id="IPR036436">
    <property type="entry name" value="Disintegrin_dom_sf"/>
</dbReference>
<dbReference type="InterPro" id="IPR000742">
    <property type="entry name" value="EGF-like_dom"/>
</dbReference>
<dbReference type="InterPro" id="IPR024079">
    <property type="entry name" value="MetalloPept_cat_dom_sf"/>
</dbReference>
<dbReference type="InterPro" id="IPR001590">
    <property type="entry name" value="Peptidase_M12B"/>
</dbReference>
<dbReference type="InterPro" id="IPR034027">
    <property type="entry name" value="Reprolysin_adamalysin"/>
</dbReference>
<dbReference type="PANTHER" id="PTHR11905">
    <property type="entry name" value="ADAM A DISINTEGRIN AND METALLOPROTEASE DOMAIN"/>
    <property type="match status" value="1"/>
</dbReference>
<dbReference type="PANTHER" id="PTHR11905:SF120">
    <property type="entry name" value="DISINTEGRIN AND METALLOPROTEINASE DOMAIN-CONTAINING PROTEIN 1A"/>
    <property type="match status" value="1"/>
</dbReference>
<dbReference type="Pfam" id="PF08516">
    <property type="entry name" value="ADAM_CR"/>
    <property type="match status" value="1"/>
</dbReference>
<dbReference type="Pfam" id="PF00200">
    <property type="entry name" value="Disintegrin"/>
    <property type="match status" value="1"/>
</dbReference>
<dbReference type="Pfam" id="PF01421">
    <property type="entry name" value="Reprolysin"/>
    <property type="match status" value="1"/>
</dbReference>
<dbReference type="PRINTS" id="PR00289">
    <property type="entry name" value="DISINTEGRIN"/>
</dbReference>
<dbReference type="SMART" id="SM00608">
    <property type="entry name" value="ACR"/>
    <property type="match status" value="1"/>
</dbReference>
<dbReference type="SMART" id="SM00050">
    <property type="entry name" value="DISIN"/>
    <property type="match status" value="1"/>
</dbReference>
<dbReference type="SUPFAM" id="SSF57552">
    <property type="entry name" value="Blood coagulation inhibitor (disintegrin)"/>
    <property type="match status" value="1"/>
</dbReference>
<dbReference type="SUPFAM" id="SSF55486">
    <property type="entry name" value="Metalloproteases ('zincins'), catalytic domain"/>
    <property type="match status" value="1"/>
</dbReference>
<dbReference type="PROSITE" id="PS50215">
    <property type="entry name" value="ADAM_MEPRO"/>
    <property type="match status" value="1"/>
</dbReference>
<dbReference type="PROSITE" id="PS00427">
    <property type="entry name" value="DISINTEGRIN_1"/>
    <property type="match status" value="1"/>
</dbReference>
<dbReference type="PROSITE" id="PS50214">
    <property type="entry name" value="DISINTEGRIN_2"/>
    <property type="match status" value="1"/>
</dbReference>
<dbReference type="PROSITE" id="PS01186">
    <property type="entry name" value="EGF_2"/>
    <property type="match status" value="1"/>
</dbReference>
<dbReference type="PROSITE" id="PS50026">
    <property type="entry name" value="EGF_3"/>
    <property type="match status" value="1"/>
</dbReference>
<dbReference type="PROSITE" id="PS00142">
    <property type="entry name" value="ZINC_PROTEASE"/>
    <property type="match status" value="1"/>
</dbReference>
<organism evidence="9">
    <name type="scientific">Rattus norvegicus</name>
    <name type="common">Rat</name>
    <dbReference type="NCBI Taxonomy" id="10116"/>
    <lineage>
        <taxon>Eukaryota</taxon>
        <taxon>Metazoa</taxon>
        <taxon>Chordata</taxon>
        <taxon>Craniata</taxon>
        <taxon>Vertebrata</taxon>
        <taxon>Euteleostomi</taxon>
        <taxon>Mammalia</taxon>
        <taxon>Eutheria</taxon>
        <taxon>Euarchontoglires</taxon>
        <taxon>Glires</taxon>
        <taxon>Rodentia</taxon>
        <taxon>Myomorpha</taxon>
        <taxon>Muroidea</taxon>
        <taxon>Muridae</taxon>
        <taxon>Murinae</taxon>
        <taxon>Rattus</taxon>
    </lineage>
</organism>
<name>ADAM1_RAT</name>
<proteinExistence type="evidence at transcript level"/>
<comment type="function">
    <text>May be involved in sperm-egg fusion.</text>
</comment>
<comment type="subunit">
    <text>Heterodimer with ADAM2/fertilin subunit beta.</text>
</comment>
<comment type="subcellular location">
    <subcellularLocation>
        <location evidence="8">Membrane</location>
        <topology evidence="8">Single-pass type I membrane protein</topology>
    </subcellularLocation>
</comment>
<comment type="developmental stage">
    <text evidence="7">In the testis, expressed at all stages of development.</text>
</comment>
<keyword id="KW-1015">Disulfide bond</keyword>
<keyword id="KW-0245">EGF-like domain</keyword>
<keyword id="KW-0325">Glycoprotein</keyword>
<keyword id="KW-0378">Hydrolase</keyword>
<keyword id="KW-0472">Membrane</keyword>
<keyword id="KW-0479">Metal-binding</keyword>
<keyword id="KW-0482">Metalloprotease</keyword>
<keyword id="KW-0645">Protease</keyword>
<keyword id="KW-1185">Reference proteome</keyword>
<keyword id="KW-0732">Signal</keyword>
<keyword id="KW-0812">Transmembrane</keyword>
<keyword id="KW-1133">Transmembrane helix</keyword>
<keyword id="KW-0862">Zinc</keyword>
<protein>
    <recommendedName>
        <fullName>Disintegrin and metalloproteinase domain-containing protein 1</fullName>
        <shortName>ADAM 1</shortName>
        <ecNumber>3.4.24.-</ecNumber>
    </recommendedName>
    <alternativeName>
        <fullName>Fertilin subunit alpha</fullName>
    </alternativeName>
</protein>
<feature type="signal peptide" evidence="2">
    <location>
        <begin position="1"/>
        <end position="68"/>
    </location>
</feature>
<feature type="propeptide" id="PRO_0000029036" evidence="2">
    <location>
        <begin position="69"/>
        <end status="unknown"/>
    </location>
</feature>
<feature type="chain" id="PRO_0000029037" description="Disintegrin and metalloproteinase domain-containing protein 1">
    <location>
        <begin status="unknown"/>
        <end position="789"/>
    </location>
</feature>
<feature type="topological domain" description="Extracellular" evidence="2">
    <location>
        <begin status="unknown"/>
        <end position="742"/>
    </location>
</feature>
<feature type="transmembrane region" description="Helical" evidence="2">
    <location>
        <begin position="743"/>
        <end position="763"/>
    </location>
</feature>
<feature type="topological domain" description="Cytoplasmic" evidence="2">
    <location>
        <begin position="764"/>
        <end position="789"/>
    </location>
</feature>
<feature type="domain" description="Peptidase M12B" evidence="5">
    <location>
        <begin position="238"/>
        <end position="432"/>
    </location>
</feature>
<feature type="domain" description="Disintegrin" evidence="3">
    <location>
        <begin position="441"/>
        <end position="525"/>
    </location>
</feature>
<feature type="domain" description="EGF-like" evidence="4">
    <location>
        <begin position="666"/>
        <end position="700"/>
    </location>
</feature>
<feature type="active site" evidence="5 6">
    <location>
        <position position="374"/>
    </location>
</feature>
<feature type="binding site" evidence="1">
    <location>
        <position position="373"/>
    </location>
    <ligand>
        <name>Zn(2+)</name>
        <dbReference type="ChEBI" id="CHEBI:29105"/>
        <note>catalytic</note>
    </ligand>
</feature>
<feature type="binding site" evidence="1">
    <location>
        <position position="377"/>
    </location>
    <ligand>
        <name>Zn(2+)</name>
        <dbReference type="ChEBI" id="CHEBI:29105"/>
        <note>catalytic</note>
    </ligand>
</feature>
<feature type="binding site" evidence="1">
    <location>
        <position position="383"/>
    </location>
    <ligand>
        <name>Zn(2+)</name>
        <dbReference type="ChEBI" id="CHEBI:29105"/>
        <note>catalytic</note>
    </ligand>
</feature>
<feature type="glycosylation site" description="N-linked (GlcNAc...) asparagine" evidence="2">
    <location>
        <position position="259"/>
    </location>
</feature>
<feature type="glycosylation site" description="N-linked (GlcNAc...) asparagine" evidence="2">
    <location>
        <position position="410"/>
    </location>
</feature>
<feature type="glycosylation site" description="N-linked (GlcNAc...) asparagine" evidence="2">
    <location>
        <position position="633"/>
    </location>
</feature>
<feature type="glycosylation site" description="N-linked (GlcNAc...) asparagine" evidence="2">
    <location>
        <position position="720"/>
    </location>
</feature>
<feature type="disulfide bond" evidence="1">
    <location>
        <begin position="348"/>
        <end position="427"/>
    </location>
</feature>
<feature type="disulfide bond" evidence="1">
    <location>
        <begin position="388"/>
        <end position="411"/>
    </location>
</feature>
<feature type="disulfide bond" evidence="1">
    <location>
        <begin position="390"/>
        <end position="396"/>
    </location>
</feature>
<feature type="disulfide bond" evidence="1">
    <location>
        <begin position="497"/>
        <end position="517"/>
    </location>
</feature>
<feature type="disulfide bond" evidence="2">
    <location>
        <begin position="670"/>
        <end position="682"/>
    </location>
</feature>
<feature type="disulfide bond" evidence="2">
    <location>
        <begin position="676"/>
        <end position="688"/>
    </location>
</feature>
<feature type="disulfide bond" evidence="2">
    <location>
        <begin position="690"/>
        <end position="699"/>
    </location>
</feature>
<accession>P70505</accession>
<evidence type="ECO:0000250" key="1"/>
<evidence type="ECO:0000255" key="2"/>
<evidence type="ECO:0000255" key="3">
    <source>
        <dbReference type="PROSITE-ProRule" id="PRU00068"/>
    </source>
</evidence>
<evidence type="ECO:0000255" key="4">
    <source>
        <dbReference type="PROSITE-ProRule" id="PRU00076"/>
    </source>
</evidence>
<evidence type="ECO:0000255" key="5">
    <source>
        <dbReference type="PROSITE-ProRule" id="PRU00276"/>
    </source>
</evidence>
<evidence type="ECO:0000255" key="6">
    <source>
        <dbReference type="PROSITE-ProRule" id="PRU10095"/>
    </source>
</evidence>
<evidence type="ECO:0000269" key="7">
    <source>
    </source>
</evidence>
<evidence type="ECO:0000305" key="8"/>
<evidence type="ECO:0000312" key="9">
    <source>
        <dbReference type="EMBL" id="CAA69908.1"/>
    </source>
</evidence>
<gene>
    <name type="primary">Adam1</name>
    <name type="synonym">Adam1a</name>
    <name type="synonym">Ftna</name>
</gene>
<reference evidence="8" key="1">
    <citation type="journal article" date="1997" name="Mol. Hum. Reprod.">
        <title>Cloning and sequence analysis of rat fertilin alpha and beta - developmental expression, processing and immunolocalization.</title>
        <authorList>
            <person name="McLaughlin E.A."/>
            <person name="Frayne J."/>
            <person name="Barker H.L."/>
            <person name="Jury J.A."/>
            <person name="Jones R."/>
            <person name="Ford W.C.L."/>
            <person name="Hall L."/>
        </authorList>
    </citation>
    <scope>NUCLEOTIDE SEQUENCE [MRNA]</scope>
    <scope>DEVELOPMENTAL STAGE</scope>
    <source>
        <strain>Sprague-Dawley</strain>
        <tissue>Testis</tissue>
    </source>
</reference>
<sequence>MSVAASASRSASTLCSPQIQQGALKEAKVPPHIWAARHWNLGLRLVPGHASVRAGILVLLIFLPSTLCDLGSVYDSSYETVIPERLPGQGSDDPGGKVSYVLLMQGQKQLLHLEVKGHYSERNFPVYSYHHGILGQEVPLLSQACHYEGHIEGVPGSFVSVSICSGLRGVLIKEETAYGIEPLLFSTDFEHILYTMAHQPVVLCNVTPTDSLGDSSQRQGSSKTDELLALSDLWSHAKYVEMFVVVNHQRFQMWGSDVNTTVQAVVDIIALANSFTRGINTEVVLVGLEIWTEGDPIEVPVDLQATLRNFNLWRQEKLMGRVRHDVAHLIVGHRPGANEGQAFLDGACSGGFAAAVEAFHHEDVLLFAALMAHELGHNLGIRHDRPGCTCGPKHLCLMHETISKTSGFSNCSSDHFLRFLHDHRGACLLDRPWHQSHKRRDAHCGNGVVEESEECDCGNACDSHPCCEPTCTLKVGAQCSEGLCCYKCTFKKKGTLCRPAEDVCDLPEYCNGITGECPANSYMQDGTQCDRIYYCSGGLCKNPDKQCARIYGYPARSAPEECYISVNTKANRFGNCGHPTSANLKYEACSNEDIFCGKLVCTDVRYLPQVKPLHSLLQIPYGDDWCWSMDAYNVTDIPDYGDVQGGTYCAPKKVCMESICTGHATLQYDCHPQEMCHGNGVCNNFKHCHCDAGFSPPDCSSGGNGGSVDSGPVGKPADRNLSLFGVGESPDSRMEDEEINLKVVVLVVPIFLIVLLCCLMLIAYLWSEVQEAVSPGSSSTTSSSESESD</sequence>